<gene>
    <name evidence="1" type="primary">apaG</name>
    <name type="ordered locus">RC1_2375</name>
</gene>
<name>APAG_RHOCS</name>
<sequence>MYSEVTRSIRVTVRPEYLAQQSQPEERRFVWAYHVRIENEGLETVQLRTRHWQVTDAQGRVQEVRGPGVVGEQPVLRPGEAFEYTSGTPLPTPSGFMVGSYGMVTASGEAFEVRIPAFSLDSPHGRSRPN</sequence>
<organism>
    <name type="scientific">Rhodospirillum centenum (strain ATCC 51521 / SW)</name>
    <dbReference type="NCBI Taxonomy" id="414684"/>
    <lineage>
        <taxon>Bacteria</taxon>
        <taxon>Pseudomonadati</taxon>
        <taxon>Pseudomonadota</taxon>
        <taxon>Alphaproteobacteria</taxon>
        <taxon>Rhodospirillales</taxon>
        <taxon>Rhodospirillaceae</taxon>
        <taxon>Rhodospirillum</taxon>
    </lineage>
</organism>
<dbReference type="EMBL" id="CP000613">
    <property type="protein sequence ID" value="ACI99761.1"/>
    <property type="molecule type" value="Genomic_DNA"/>
</dbReference>
<dbReference type="RefSeq" id="WP_012567545.1">
    <property type="nucleotide sequence ID" value="NC_011420.2"/>
</dbReference>
<dbReference type="SMR" id="B6IPQ9"/>
<dbReference type="STRING" id="414684.RC1_2375"/>
<dbReference type="KEGG" id="rce:RC1_2375"/>
<dbReference type="eggNOG" id="COG2967">
    <property type="taxonomic scope" value="Bacteria"/>
</dbReference>
<dbReference type="HOGENOM" id="CLU_128074_1_0_5"/>
<dbReference type="OrthoDB" id="9795226at2"/>
<dbReference type="Proteomes" id="UP000001591">
    <property type="component" value="Chromosome"/>
</dbReference>
<dbReference type="GO" id="GO:0070987">
    <property type="term" value="P:error-free translesion synthesis"/>
    <property type="evidence" value="ECO:0007669"/>
    <property type="project" value="TreeGrafter"/>
</dbReference>
<dbReference type="Gene3D" id="2.60.40.1470">
    <property type="entry name" value="ApaG domain"/>
    <property type="match status" value="1"/>
</dbReference>
<dbReference type="HAMAP" id="MF_00791">
    <property type="entry name" value="ApaG"/>
    <property type="match status" value="1"/>
</dbReference>
<dbReference type="InterPro" id="IPR007474">
    <property type="entry name" value="ApaG_domain"/>
</dbReference>
<dbReference type="InterPro" id="IPR036767">
    <property type="entry name" value="ApaG_sf"/>
</dbReference>
<dbReference type="InterPro" id="IPR023065">
    <property type="entry name" value="Uncharacterised_ApaG"/>
</dbReference>
<dbReference type="NCBIfam" id="NF003967">
    <property type="entry name" value="PRK05461.1"/>
    <property type="match status" value="1"/>
</dbReference>
<dbReference type="PANTHER" id="PTHR14289">
    <property type="entry name" value="F-BOX ONLY PROTEIN 3"/>
    <property type="match status" value="1"/>
</dbReference>
<dbReference type="PANTHER" id="PTHR14289:SF16">
    <property type="entry name" value="POLYMERASE DELTA-INTERACTING PROTEIN 2"/>
    <property type="match status" value="1"/>
</dbReference>
<dbReference type="Pfam" id="PF04379">
    <property type="entry name" value="DUF525"/>
    <property type="match status" value="1"/>
</dbReference>
<dbReference type="SUPFAM" id="SSF110069">
    <property type="entry name" value="ApaG-like"/>
    <property type="match status" value="1"/>
</dbReference>
<dbReference type="PROSITE" id="PS51087">
    <property type="entry name" value="APAG"/>
    <property type="match status" value="1"/>
</dbReference>
<reference key="1">
    <citation type="submission" date="2007-03" db="EMBL/GenBank/DDBJ databases">
        <title>Genome sequence of Rhodospirillum centenum.</title>
        <authorList>
            <person name="Touchman J.W."/>
            <person name="Bauer C."/>
            <person name="Blankenship R.E."/>
        </authorList>
    </citation>
    <scope>NUCLEOTIDE SEQUENCE [LARGE SCALE GENOMIC DNA]</scope>
    <source>
        <strain>ATCC 51521 / SW</strain>
    </source>
</reference>
<protein>
    <recommendedName>
        <fullName evidence="1">Protein ApaG</fullName>
    </recommendedName>
</protein>
<proteinExistence type="inferred from homology"/>
<evidence type="ECO:0000255" key="1">
    <source>
        <dbReference type="HAMAP-Rule" id="MF_00791"/>
    </source>
</evidence>
<keyword id="KW-1185">Reference proteome</keyword>
<feature type="chain" id="PRO_1000133805" description="Protein ApaG">
    <location>
        <begin position="1"/>
        <end position="130"/>
    </location>
</feature>
<feature type="domain" description="ApaG" evidence="1">
    <location>
        <begin position="3"/>
        <end position="127"/>
    </location>
</feature>
<accession>B6IPQ9</accession>